<reference key="1">
    <citation type="journal article" date="2003" name="Nucleic Acids Res.">
        <title>The complete genome sequence and analysis of Corynebacterium diphtheriae NCTC13129.</title>
        <authorList>
            <person name="Cerdeno-Tarraga A.-M."/>
            <person name="Efstratiou A."/>
            <person name="Dover L.G."/>
            <person name="Holden M.T.G."/>
            <person name="Pallen M.J."/>
            <person name="Bentley S.D."/>
            <person name="Besra G.S."/>
            <person name="Churcher C.M."/>
            <person name="James K.D."/>
            <person name="De Zoysa A."/>
            <person name="Chillingworth T."/>
            <person name="Cronin A."/>
            <person name="Dowd L."/>
            <person name="Feltwell T."/>
            <person name="Hamlin N."/>
            <person name="Holroyd S."/>
            <person name="Jagels K."/>
            <person name="Moule S."/>
            <person name="Quail M.A."/>
            <person name="Rabbinowitsch E."/>
            <person name="Rutherford K.M."/>
            <person name="Thomson N.R."/>
            <person name="Unwin L."/>
            <person name="Whitehead S."/>
            <person name="Barrell B.G."/>
            <person name="Parkhill J."/>
        </authorList>
    </citation>
    <scope>NUCLEOTIDE SEQUENCE [LARGE SCALE GENOMIC DNA]</scope>
    <source>
        <strain>ATCC 700971 / NCTC 13129 / Biotype gravis</strain>
    </source>
</reference>
<feature type="chain" id="PRO_0000137762" description="Argininosuccinate lyase">
    <location>
        <begin position="1"/>
        <end position="477"/>
    </location>
</feature>
<keyword id="KW-0028">Amino-acid biosynthesis</keyword>
<keyword id="KW-0055">Arginine biosynthesis</keyword>
<keyword id="KW-0963">Cytoplasm</keyword>
<keyword id="KW-0456">Lyase</keyword>
<keyword id="KW-1185">Reference proteome</keyword>
<protein>
    <recommendedName>
        <fullName evidence="1">Argininosuccinate lyase</fullName>
        <shortName evidence="1">ASAL</shortName>
        <ecNumber evidence="1">4.3.2.1</ecNumber>
    </recommendedName>
    <alternativeName>
        <fullName evidence="1">Arginosuccinase</fullName>
    </alternativeName>
</protein>
<gene>
    <name evidence="1" type="primary">argH</name>
    <name type="ordered locus">DIP1174</name>
</gene>
<evidence type="ECO:0000255" key="1">
    <source>
        <dbReference type="HAMAP-Rule" id="MF_00006"/>
    </source>
</evidence>
<name>ARLY_CORDI</name>
<comment type="catalytic activity">
    <reaction evidence="1">
        <text>2-(N(omega)-L-arginino)succinate = fumarate + L-arginine</text>
        <dbReference type="Rhea" id="RHEA:24020"/>
        <dbReference type="ChEBI" id="CHEBI:29806"/>
        <dbReference type="ChEBI" id="CHEBI:32682"/>
        <dbReference type="ChEBI" id="CHEBI:57472"/>
        <dbReference type="EC" id="4.3.2.1"/>
    </reaction>
</comment>
<comment type="pathway">
    <text evidence="1">Amino-acid biosynthesis; L-arginine biosynthesis; L-arginine from L-ornithine and carbamoyl phosphate: step 3/3.</text>
</comment>
<comment type="subcellular location">
    <subcellularLocation>
        <location evidence="1">Cytoplasm</location>
    </subcellularLocation>
</comment>
<comment type="similarity">
    <text evidence="1">Belongs to the lyase 1 family. Argininosuccinate lyase subfamily.</text>
</comment>
<accession>Q6NHG4</accession>
<proteinExistence type="inferred from homology"/>
<dbReference type="EC" id="4.3.2.1" evidence="1"/>
<dbReference type="EMBL" id="BX248357">
    <property type="protein sequence ID" value="CAE49694.1"/>
    <property type="molecule type" value="Genomic_DNA"/>
</dbReference>
<dbReference type="RefSeq" id="WP_010934860.1">
    <property type="nucleotide sequence ID" value="NC_002935.2"/>
</dbReference>
<dbReference type="SMR" id="Q6NHG4"/>
<dbReference type="STRING" id="257309.DIP1174"/>
<dbReference type="KEGG" id="cdi:DIP1174"/>
<dbReference type="HOGENOM" id="CLU_027272_2_2_11"/>
<dbReference type="UniPathway" id="UPA00068">
    <property type="reaction ID" value="UER00114"/>
</dbReference>
<dbReference type="Proteomes" id="UP000002198">
    <property type="component" value="Chromosome"/>
</dbReference>
<dbReference type="GO" id="GO:0005829">
    <property type="term" value="C:cytosol"/>
    <property type="evidence" value="ECO:0007669"/>
    <property type="project" value="TreeGrafter"/>
</dbReference>
<dbReference type="GO" id="GO:0004056">
    <property type="term" value="F:argininosuccinate lyase activity"/>
    <property type="evidence" value="ECO:0007669"/>
    <property type="project" value="UniProtKB-UniRule"/>
</dbReference>
<dbReference type="GO" id="GO:0042450">
    <property type="term" value="P:arginine biosynthetic process via ornithine"/>
    <property type="evidence" value="ECO:0007669"/>
    <property type="project" value="InterPro"/>
</dbReference>
<dbReference type="GO" id="GO:0006526">
    <property type="term" value="P:L-arginine biosynthetic process"/>
    <property type="evidence" value="ECO:0007669"/>
    <property type="project" value="UniProtKB-UniRule"/>
</dbReference>
<dbReference type="CDD" id="cd01359">
    <property type="entry name" value="Argininosuccinate_lyase"/>
    <property type="match status" value="1"/>
</dbReference>
<dbReference type="FunFam" id="1.10.40.30:FF:000001">
    <property type="entry name" value="Argininosuccinate lyase"/>
    <property type="match status" value="1"/>
</dbReference>
<dbReference type="FunFam" id="1.20.200.10:FF:000015">
    <property type="entry name" value="argininosuccinate lyase isoform X2"/>
    <property type="match status" value="1"/>
</dbReference>
<dbReference type="Gene3D" id="1.10.40.30">
    <property type="entry name" value="Fumarase/aspartase (C-terminal domain)"/>
    <property type="match status" value="1"/>
</dbReference>
<dbReference type="Gene3D" id="1.20.200.10">
    <property type="entry name" value="Fumarase/aspartase (Central domain)"/>
    <property type="match status" value="1"/>
</dbReference>
<dbReference type="Gene3D" id="1.10.275.10">
    <property type="entry name" value="Fumarase/aspartase (N-terminal domain)"/>
    <property type="match status" value="1"/>
</dbReference>
<dbReference type="HAMAP" id="MF_00006">
    <property type="entry name" value="Arg_succ_lyase"/>
    <property type="match status" value="1"/>
</dbReference>
<dbReference type="InterPro" id="IPR029419">
    <property type="entry name" value="Arg_succ_lyase_C"/>
</dbReference>
<dbReference type="InterPro" id="IPR009049">
    <property type="entry name" value="Argininosuccinate_lyase"/>
</dbReference>
<dbReference type="InterPro" id="IPR024083">
    <property type="entry name" value="Fumarase/histidase_N"/>
</dbReference>
<dbReference type="InterPro" id="IPR020557">
    <property type="entry name" value="Fumarate_lyase_CS"/>
</dbReference>
<dbReference type="InterPro" id="IPR000362">
    <property type="entry name" value="Fumarate_lyase_fam"/>
</dbReference>
<dbReference type="InterPro" id="IPR022761">
    <property type="entry name" value="Fumarate_lyase_N"/>
</dbReference>
<dbReference type="InterPro" id="IPR008948">
    <property type="entry name" value="L-Aspartase-like"/>
</dbReference>
<dbReference type="NCBIfam" id="TIGR00838">
    <property type="entry name" value="argH"/>
    <property type="match status" value="1"/>
</dbReference>
<dbReference type="PANTHER" id="PTHR43814">
    <property type="entry name" value="ARGININOSUCCINATE LYASE"/>
    <property type="match status" value="1"/>
</dbReference>
<dbReference type="PANTHER" id="PTHR43814:SF1">
    <property type="entry name" value="ARGININOSUCCINATE LYASE"/>
    <property type="match status" value="1"/>
</dbReference>
<dbReference type="Pfam" id="PF14698">
    <property type="entry name" value="ASL_C2"/>
    <property type="match status" value="1"/>
</dbReference>
<dbReference type="Pfam" id="PF00206">
    <property type="entry name" value="Lyase_1"/>
    <property type="match status" value="1"/>
</dbReference>
<dbReference type="PRINTS" id="PR00145">
    <property type="entry name" value="ARGSUCLYASE"/>
</dbReference>
<dbReference type="PRINTS" id="PR00149">
    <property type="entry name" value="FUMRATELYASE"/>
</dbReference>
<dbReference type="SUPFAM" id="SSF48557">
    <property type="entry name" value="L-aspartase-like"/>
    <property type="match status" value="1"/>
</dbReference>
<dbReference type="PROSITE" id="PS00163">
    <property type="entry name" value="FUMARATE_LYASES"/>
    <property type="match status" value="1"/>
</dbReference>
<sequence length="477" mass="51573">MQKHGTNEGALWGGRFSGGPSEAMFALSVSTHFDWVLAPYDVLASKAHARVLNKAKLLSDSDLETMLGGLDKLGKAVASGEFKPLPTDEDVHGAMERGLIDIVGPEVGGRLRAGRSRNDQVATLFRMWVRDAVRSVALQVTELVDALAYQATQHPRAIMPGKTHSQAAQPVLLAHQLLAHAQPLLRDIDRIRDLDKRLAISPYGSGALAGSSLHLDPEAIAQELGFDSACDNSIDGTSSRDFAAETAYVLAQIAIDMSRLAEEIIYWCTPEYGYVTLSDAWSTGSSIMPQKKNPDVAELTRGKTGRLIGNLSGLLATLKAQPLAYNRDLQEDKEPIVDSFAQLNLLLPAMTGLVSTLTFHEDRLLSLAPAGFTLATDLAEWMVRQGVPFREAHEASGACVRIAESRGVGLDELTDDELASVDVRLTPEVRTVLTVEGAVASRATRGGTAGVRVEEQRSRVESTSQSFKEWALTPVRK</sequence>
<organism>
    <name type="scientific">Corynebacterium diphtheriae (strain ATCC 700971 / NCTC 13129 / Biotype gravis)</name>
    <dbReference type="NCBI Taxonomy" id="257309"/>
    <lineage>
        <taxon>Bacteria</taxon>
        <taxon>Bacillati</taxon>
        <taxon>Actinomycetota</taxon>
        <taxon>Actinomycetes</taxon>
        <taxon>Mycobacteriales</taxon>
        <taxon>Corynebacteriaceae</taxon>
        <taxon>Corynebacterium</taxon>
    </lineage>
</organism>